<protein>
    <recommendedName>
        <fullName>Nitrogenase-stabilizing/protective protein NifW</fullName>
    </recommendedName>
</protein>
<comment type="function">
    <text evidence="1">May protect the nitrogenase Fe-Mo protein from oxidative damage.</text>
</comment>
<comment type="subunit">
    <text evidence="1">Homotrimer; associates with NifD.</text>
</comment>
<comment type="similarity">
    <text evidence="2">Belongs to the NifW family.</text>
</comment>
<gene>
    <name type="primary">nifW</name>
</gene>
<evidence type="ECO:0000250" key="1"/>
<evidence type="ECO:0000305" key="2"/>
<feature type="chain" id="PRO_0000219536" description="Nitrogenase-stabilizing/protective protein NifW">
    <location>
        <begin position="1"/>
        <end position="127"/>
    </location>
</feature>
<keyword id="KW-0535">Nitrogen fixation</keyword>
<name>NIFW_RHIET</name>
<organism>
    <name type="scientific">Rhizobium etli</name>
    <dbReference type="NCBI Taxonomy" id="29449"/>
    <lineage>
        <taxon>Bacteria</taxon>
        <taxon>Pseudomonadati</taxon>
        <taxon>Pseudomonadota</taxon>
        <taxon>Alphaproteobacteria</taxon>
        <taxon>Hyphomicrobiales</taxon>
        <taxon>Rhizobiaceae</taxon>
        <taxon>Rhizobium/Agrobacterium group</taxon>
        <taxon>Rhizobium</taxon>
    </lineage>
</organism>
<accession>Q93JR5</accession>
<reference key="1">
    <citation type="journal article" date="1998" name="J. Bacteriol.">
        <title>Differential regulation of the Rhizobium etli rpoN2 gene expression during symbiosis and free-living growth.</title>
        <authorList>
            <person name="Michiels J."/>
            <person name="Moris M."/>
            <person name="Dombrecht B."/>
            <person name="Verreth C."/>
            <person name="Vanderleyden J."/>
        </authorList>
    </citation>
    <scope>NUCLEOTIDE SEQUENCE [GENOMIC DNA]</scope>
    <source>
        <strain>CNPAF512</strain>
    </source>
</reference>
<proteinExistence type="inferred from homology"/>
<sequence length="127" mass="14270">MCRCSADSSPVDVKDILNRLKSLSAAEEFFEALGGPYDPKVLDVSRLHIMKRMGQYLAAEDFSHLPDRVIAARARAILERAYCDFATSAPLSHRVFKVLKDHNPNRPVTPGRTVVPLDSFLKPFEKK</sequence>
<dbReference type="EMBL" id="AJ005696">
    <property type="protein sequence ID" value="CAC44788.1"/>
    <property type="molecule type" value="Genomic_DNA"/>
</dbReference>
<dbReference type="GO" id="GO:0009399">
    <property type="term" value="P:nitrogen fixation"/>
    <property type="evidence" value="ECO:0007669"/>
    <property type="project" value="UniProtKB-UniRule"/>
</dbReference>
<dbReference type="HAMAP" id="MF_00529">
    <property type="entry name" value="NifW"/>
    <property type="match status" value="1"/>
</dbReference>
<dbReference type="InterPro" id="IPR004893">
    <property type="entry name" value="NifW"/>
</dbReference>
<dbReference type="NCBIfam" id="NF002009">
    <property type="entry name" value="PRK00810.1"/>
    <property type="match status" value="1"/>
</dbReference>
<dbReference type="Pfam" id="PF03206">
    <property type="entry name" value="NifW"/>
    <property type="match status" value="1"/>
</dbReference>
<dbReference type="PIRSF" id="PIRSF005790">
    <property type="entry name" value="NifW"/>
    <property type="match status" value="1"/>
</dbReference>